<dbReference type="EMBL" id="AJ567472">
    <property type="protein sequence ID" value="CAD98937.1"/>
    <property type="molecule type" value="Genomic_DNA"/>
</dbReference>
<dbReference type="RefSeq" id="YP_003733.1">
    <property type="nucleotide sequence ID" value="NC_005830.1"/>
</dbReference>
<dbReference type="SMR" id="Q70LE3"/>
<dbReference type="KEGG" id="vg:2769159"/>
<dbReference type="Proteomes" id="UP000000514">
    <property type="component" value="Genome"/>
</dbReference>
<dbReference type="GO" id="GO:0006355">
    <property type="term" value="P:regulation of DNA-templated transcription"/>
    <property type="evidence" value="ECO:0007669"/>
    <property type="project" value="InterPro"/>
</dbReference>
<dbReference type="CDD" id="cd22231">
    <property type="entry name" value="RHH_NikR_HicB-like"/>
    <property type="match status" value="1"/>
</dbReference>
<dbReference type="Gene3D" id="1.10.1220.10">
    <property type="entry name" value="Met repressor-like"/>
    <property type="match status" value="1"/>
</dbReference>
<dbReference type="InterPro" id="IPR013321">
    <property type="entry name" value="Arc_rbn_hlx_hlx"/>
</dbReference>
<dbReference type="InterPro" id="IPR002145">
    <property type="entry name" value="CopG"/>
</dbReference>
<dbReference type="InterPro" id="IPR010985">
    <property type="entry name" value="Ribbon_hlx_hlx"/>
</dbReference>
<dbReference type="Pfam" id="PF01402">
    <property type="entry name" value="RHH_1"/>
    <property type="match status" value="1"/>
</dbReference>
<dbReference type="SUPFAM" id="SSF47598">
    <property type="entry name" value="Ribbon-helix-helix"/>
    <property type="match status" value="1"/>
</dbReference>
<protein>
    <recommendedName>
        <fullName>Uncharacterized protein ORF59b</fullName>
    </recommendedName>
</protein>
<reference key="1">
    <citation type="journal article" date="2003" name="Virology">
        <title>AFV1, a novel virus infecting hyperthermophilic archaea of the genus acidianus.</title>
        <authorList>
            <person name="Bettstetter M."/>
            <person name="Peng X."/>
            <person name="Garrett R.A."/>
            <person name="Prangishvili D."/>
        </authorList>
    </citation>
    <scope>NUCLEOTIDE SEQUENCE [GENOMIC DNA]</scope>
</reference>
<gene>
    <name type="ORF">ORF59b</name>
</gene>
<feature type="chain" id="PRO_0000384540" description="Uncharacterized protein ORF59b">
    <location>
        <begin position="1"/>
        <end position="59"/>
    </location>
</feature>
<organismHost>
    <name type="scientific">Acidianus hospitalis</name>
    <dbReference type="NCBI Taxonomy" id="563177"/>
</organismHost>
<organismHost>
    <name type="scientific">Acidianus infernus</name>
    <dbReference type="NCBI Taxonomy" id="12915"/>
</organismHost>
<keyword id="KW-1185">Reference proteome</keyword>
<proteinExistence type="predicted"/>
<organism>
    <name type="scientific">Acidianus filamentous virus 1 (isolate United States/Yellowstone)</name>
    <name type="common">AFV-1</name>
    <dbReference type="NCBI Taxonomy" id="654909"/>
    <lineage>
        <taxon>Viruses</taxon>
        <taxon>Adnaviria</taxon>
        <taxon>Zilligvirae</taxon>
        <taxon>Taleaviricota</taxon>
        <taxon>Tokiviricetes</taxon>
        <taxon>Ligamenvirales</taxon>
        <taxon>Ungulaviridae</taxon>
        <taxon>Captovirus</taxon>
        <taxon>Acidianus filamentous virus 1</taxon>
    </lineage>
</organism>
<accession>Q70LE3</accession>
<sequence length="59" mass="6995">MRKVAFKVNEDLLELLDKYAIKHGLSRSEVIREAIKNMVKEELEKDSIIVARVEKIRIW</sequence>
<name>Y059B_AFV1Y</name>